<protein>
    <recommendedName>
        <fullName evidence="1">Chaperone protein HtpG</fullName>
    </recommendedName>
    <alternativeName>
        <fullName evidence="1">Heat shock protein HtpG</fullName>
    </alternativeName>
    <alternativeName>
        <fullName evidence="1">High temperature protein G</fullName>
    </alternativeName>
</protein>
<keyword id="KW-0067">ATP-binding</keyword>
<keyword id="KW-0143">Chaperone</keyword>
<keyword id="KW-0963">Cytoplasm</keyword>
<keyword id="KW-0547">Nucleotide-binding</keyword>
<keyword id="KW-1185">Reference proteome</keyword>
<keyword id="KW-0346">Stress response</keyword>
<name>HTPG_MYXXD</name>
<dbReference type="EMBL" id="CP000113">
    <property type="protein sequence ID" value="ABF89090.1"/>
    <property type="molecule type" value="Genomic_DNA"/>
</dbReference>
<dbReference type="RefSeq" id="WP_011556000.1">
    <property type="nucleotide sequence ID" value="NC_008095.1"/>
</dbReference>
<dbReference type="SMR" id="Q1CZI7"/>
<dbReference type="STRING" id="246197.MXAN_6051"/>
<dbReference type="EnsemblBacteria" id="ABF89090">
    <property type="protein sequence ID" value="ABF89090"/>
    <property type="gene ID" value="MXAN_6051"/>
</dbReference>
<dbReference type="GeneID" id="41363289"/>
<dbReference type="KEGG" id="mxa:MXAN_6051"/>
<dbReference type="eggNOG" id="COG0326">
    <property type="taxonomic scope" value="Bacteria"/>
</dbReference>
<dbReference type="HOGENOM" id="CLU_006684_3_0_7"/>
<dbReference type="OrthoDB" id="9802640at2"/>
<dbReference type="Proteomes" id="UP000002402">
    <property type="component" value="Chromosome"/>
</dbReference>
<dbReference type="GO" id="GO:0005737">
    <property type="term" value="C:cytoplasm"/>
    <property type="evidence" value="ECO:0007669"/>
    <property type="project" value="UniProtKB-SubCell"/>
</dbReference>
<dbReference type="GO" id="GO:0005524">
    <property type="term" value="F:ATP binding"/>
    <property type="evidence" value="ECO:0007669"/>
    <property type="project" value="UniProtKB-UniRule"/>
</dbReference>
<dbReference type="GO" id="GO:0016887">
    <property type="term" value="F:ATP hydrolysis activity"/>
    <property type="evidence" value="ECO:0007669"/>
    <property type="project" value="InterPro"/>
</dbReference>
<dbReference type="GO" id="GO:0140662">
    <property type="term" value="F:ATP-dependent protein folding chaperone"/>
    <property type="evidence" value="ECO:0007669"/>
    <property type="project" value="InterPro"/>
</dbReference>
<dbReference type="GO" id="GO:0051082">
    <property type="term" value="F:unfolded protein binding"/>
    <property type="evidence" value="ECO:0007669"/>
    <property type="project" value="UniProtKB-UniRule"/>
</dbReference>
<dbReference type="CDD" id="cd16927">
    <property type="entry name" value="HATPase_Hsp90-like"/>
    <property type="match status" value="1"/>
</dbReference>
<dbReference type="FunFam" id="3.40.50.11260:FF:000001">
    <property type="entry name" value="Heat shock protein 90 alpha"/>
    <property type="match status" value="1"/>
</dbReference>
<dbReference type="FunFam" id="3.30.230.80:FF:000002">
    <property type="entry name" value="Molecular chaperone HtpG"/>
    <property type="match status" value="1"/>
</dbReference>
<dbReference type="FunFam" id="3.30.565.10:FF:000009">
    <property type="entry name" value="Molecular chaperone HtpG"/>
    <property type="match status" value="1"/>
</dbReference>
<dbReference type="Gene3D" id="3.30.230.80">
    <property type="match status" value="1"/>
</dbReference>
<dbReference type="Gene3D" id="3.40.50.11260">
    <property type="match status" value="1"/>
</dbReference>
<dbReference type="Gene3D" id="1.20.120.790">
    <property type="entry name" value="Heat shock protein 90, C-terminal domain"/>
    <property type="match status" value="1"/>
</dbReference>
<dbReference type="Gene3D" id="3.30.565.10">
    <property type="entry name" value="Histidine kinase-like ATPase, C-terminal domain"/>
    <property type="match status" value="1"/>
</dbReference>
<dbReference type="HAMAP" id="MF_00505">
    <property type="entry name" value="HSP90"/>
    <property type="match status" value="1"/>
</dbReference>
<dbReference type="InterPro" id="IPR036890">
    <property type="entry name" value="HATPase_C_sf"/>
</dbReference>
<dbReference type="InterPro" id="IPR019805">
    <property type="entry name" value="Heat_shock_protein_90_CS"/>
</dbReference>
<dbReference type="InterPro" id="IPR037196">
    <property type="entry name" value="HSP90_C"/>
</dbReference>
<dbReference type="InterPro" id="IPR001404">
    <property type="entry name" value="Hsp90_fam"/>
</dbReference>
<dbReference type="InterPro" id="IPR020575">
    <property type="entry name" value="Hsp90_N"/>
</dbReference>
<dbReference type="InterPro" id="IPR020568">
    <property type="entry name" value="Ribosomal_Su5_D2-typ_SF"/>
</dbReference>
<dbReference type="NCBIfam" id="NF003555">
    <property type="entry name" value="PRK05218.1"/>
    <property type="match status" value="1"/>
</dbReference>
<dbReference type="PANTHER" id="PTHR11528">
    <property type="entry name" value="HEAT SHOCK PROTEIN 90 FAMILY MEMBER"/>
    <property type="match status" value="1"/>
</dbReference>
<dbReference type="Pfam" id="PF13589">
    <property type="entry name" value="HATPase_c_3"/>
    <property type="match status" value="1"/>
</dbReference>
<dbReference type="Pfam" id="PF00183">
    <property type="entry name" value="HSP90"/>
    <property type="match status" value="1"/>
</dbReference>
<dbReference type="PIRSF" id="PIRSF002583">
    <property type="entry name" value="Hsp90"/>
    <property type="match status" value="1"/>
</dbReference>
<dbReference type="PRINTS" id="PR00775">
    <property type="entry name" value="HEATSHOCK90"/>
</dbReference>
<dbReference type="SMART" id="SM00387">
    <property type="entry name" value="HATPase_c"/>
    <property type="match status" value="1"/>
</dbReference>
<dbReference type="SUPFAM" id="SSF55874">
    <property type="entry name" value="ATPase domain of HSP90 chaperone/DNA topoisomerase II/histidine kinase"/>
    <property type="match status" value="1"/>
</dbReference>
<dbReference type="SUPFAM" id="SSF110942">
    <property type="entry name" value="HSP90 C-terminal domain"/>
    <property type="match status" value="1"/>
</dbReference>
<dbReference type="SUPFAM" id="SSF54211">
    <property type="entry name" value="Ribosomal protein S5 domain 2-like"/>
    <property type="match status" value="1"/>
</dbReference>
<dbReference type="PROSITE" id="PS00298">
    <property type="entry name" value="HSP90"/>
    <property type="match status" value="1"/>
</dbReference>
<proteinExistence type="inferred from homology"/>
<comment type="function">
    <text evidence="1">Molecular chaperone. Has ATPase activity.</text>
</comment>
<comment type="subunit">
    <text evidence="1">Homodimer.</text>
</comment>
<comment type="subcellular location">
    <subcellularLocation>
        <location evidence="1">Cytoplasm</location>
    </subcellularLocation>
</comment>
<comment type="similarity">
    <text evidence="1">Belongs to the heat shock protein 90 family.</text>
</comment>
<sequence length="654" mass="73272">MTVENAPQRETHAFQAEINQLLSLVINSLYSHKEIFLRELVSNASDALDKLRFRAITEPELLADEPALELRLIPDEAKGTLTIEDTGIGMSHDELVKNLGTIAHSGSREFIEALAQKGQQKDMQLIGQFGVGFYSAYLVADRVEVVSRAAGQGQSAWRWTSEAKGSFTVEPAERAARGTSITLHLKEDQKEFLGEWRLRSLITQYSDYVGHPIKLQVSKTTGTGDEAKTETSLEVVNKASALWQRSKSEITDEQYQEFYKHLTHDWEAPLAWTHFKADGNTQFTGLLFVPKQPPFDLDAQQQRGVRLFVKRVFIMDRCEELVPQWLRFVRGVIDSDDLPLNVSRELLQDSQVVRAIRKHVVKKSVDLLEKLAKDKPDDYLTFWKAFGTVLKEGLATEAEQKDKLGGLLRYESSREEGLTSLADYVGRMKEGQEAIYYVYGESRKAVADSPHLEALKQRGFEVLYMTDPVDEWAAQGLREFQGKPLVSALQADLKLQSTDEQKKEQEQHAEGLKTLTSKMKDVLQESVREVRVSDRLTDSPVCLVVPEGGSPAYLERLLQQRGRGAGMPRVKRILEVNPKHPVIEHLKAVHDRDPAAAQVAEWIELLHDQALLTEGSTIADPNRFARRMTGLLTQVAALAAAPAPAQTPASATAS</sequence>
<reference key="1">
    <citation type="journal article" date="2006" name="Proc. Natl. Acad. Sci. U.S.A.">
        <title>Evolution of sensory complexity recorded in a myxobacterial genome.</title>
        <authorList>
            <person name="Goldman B.S."/>
            <person name="Nierman W.C."/>
            <person name="Kaiser D."/>
            <person name="Slater S.C."/>
            <person name="Durkin A.S."/>
            <person name="Eisen J.A."/>
            <person name="Ronning C.M."/>
            <person name="Barbazuk W.B."/>
            <person name="Blanchard M."/>
            <person name="Field C."/>
            <person name="Halling C."/>
            <person name="Hinkle G."/>
            <person name="Iartchuk O."/>
            <person name="Kim H.S."/>
            <person name="Mackenzie C."/>
            <person name="Madupu R."/>
            <person name="Miller N."/>
            <person name="Shvartsbeyn A."/>
            <person name="Sullivan S.A."/>
            <person name="Vaudin M."/>
            <person name="Wiegand R."/>
            <person name="Kaplan H.B."/>
        </authorList>
    </citation>
    <scope>NUCLEOTIDE SEQUENCE [LARGE SCALE GENOMIC DNA]</scope>
    <source>
        <strain>DK1622</strain>
    </source>
</reference>
<gene>
    <name evidence="1" type="primary">htpG</name>
    <name type="ordered locus">MXAN_6051</name>
</gene>
<feature type="chain" id="PRO_0000258515" description="Chaperone protein HtpG">
    <location>
        <begin position="1"/>
        <end position="654"/>
    </location>
</feature>
<feature type="region of interest" description="A; substrate-binding" evidence="1">
    <location>
        <begin position="1"/>
        <end position="344"/>
    </location>
</feature>
<feature type="region of interest" description="B" evidence="1">
    <location>
        <begin position="345"/>
        <end position="556"/>
    </location>
</feature>
<feature type="region of interest" description="C" evidence="1">
    <location>
        <begin position="557"/>
        <end position="654"/>
    </location>
</feature>
<evidence type="ECO:0000255" key="1">
    <source>
        <dbReference type="HAMAP-Rule" id="MF_00505"/>
    </source>
</evidence>
<organism>
    <name type="scientific">Myxococcus xanthus (strain DK1622)</name>
    <dbReference type="NCBI Taxonomy" id="246197"/>
    <lineage>
        <taxon>Bacteria</taxon>
        <taxon>Pseudomonadati</taxon>
        <taxon>Myxococcota</taxon>
        <taxon>Myxococcia</taxon>
        <taxon>Myxococcales</taxon>
        <taxon>Cystobacterineae</taxon>
        <taxon>Myxococcaceae</taxon>
        <taxon>Myxococcus</taxon>
    </lineage>
</organism>
<accession>Q1CZI7</accession>